<sequence>MNRQLRFAVAGPEILAAVVSGCSSGNKSAPSSSASSSSTSPSASSGGAAGTKVIIDGKDQNVSGSVVCTNAGGTVNIAIGGAATGIAAVLSDGNPPQVKSVGLGNVNGVTLGYTSGTGQGNASAEKNGNSYKITGTATGVDMANPLQPVNKPFEIDVTCNS</sequence>
<protein>
    <recommendedName>
        <fullName>Lipoprotein LpqH</fullName>
    </recommendedName>
    <alternativeName>
        <fullName>19 kDa lipoprotein antigen</fullName>
    </alternativeName>
    <alternativeName>
        <fullName>Putative transporter LpqH</fullName>
    </alternativeName>
</protein>
<accession>P46733</accession>
<keyword id="KW-1003">Cell membrane</keyword>
<keyword id="KW-0449">Lipoprotein</keyword>
<keyword id="KW-0472">Membrane</keyword>
<keyword id="KW-0564">Palmitate</keyword>
<keyword id="KW-0732">Signal</keyword>
<keyword id="KW-0813">Transport</keyword>
<keyword id="KW-0843">Virulence</keyword>
<evidence type="ECO:0000250" key="1">
    <source>
        <dbReference type="UniProtKB" id="P9WK61"/>
    </source>
</evidence>
<evidence type="ECO:0000256" key="2">
    <source>
        <dbReference type="SAM" id="MobiDB-lite"/>
    </source>
</evidence>
<evidence type="ECO:0000305" key="3"/>
<gene>
    <name type="primary">lpqH</name>
</gene>
<comment type="function">
    <text evidence="1">Might be involved in ligand transport. A host TLR2 agonist, modifies host gene expression in response to pathogen.</text>
</comment>
<comment type="subcellular location">
    <subcellularLocation>
        <location evidence="3">Cell membrane</location>
        <topology evidence="3">Lipid-anchor</topology>
    </subcellularLocation>
</comment>
<comment type="domain">
    <text evidence="1">Forms a U-shaped beta-half-barrel with a large hydrophobic cavity.</text>
</comment>
<comment type="PTM">
    <text evidence="1">Modified by Lgt on Cys-22 with an S-linked diacylglycerol with a mixture of C16, C18 and C19 fatty acids, signal peptide is removed by LspA, modifed by Lnt with an amide-linked mixture of C16 and C19 fatty acids.</text>
</comment>
<comment type="similarity">
    <text evidence="3">Belongs to the mycobacterial 19 kDa antigen family.</text>
</comment>
<dbReference type="EMBL" id="L12235">
    <property type="protein sequence ID" value="AAA25346.1"/>
    <property type="molecule type" value="Genomic_DNA"/>
</dbReference>
<dbReference type="SMR" id="P46733"/>
<dbReference type="GO" id="GO:0005886">
    <property type="term" value="C:plasma membrane"/>
    <property type="evidence" value="ECO:0007669"/>
    <property type="project" value="UniProtKB-SubCell"/>
</dbReference>
<dbReference type="InterPro" id="IPR008691">
    <property type="entry name" value="LpqH"/>
</dbReference>
<dbReference type="Pfam" id="PF05481">
    <property type="entry name" value="Myco_19_kDa"/>
    <property type="match status" value="1"/>
</dbReference>
<reference key="1">
    <citation type="journal article" date="1993" name="Infect. Immun.">
        <title>Homologs of Mycobacterium leprae 18-kilodalton and Mycobacterium tuberculosis 19-kilodalton antigens in other mycobacteria.</title>
        <authorList>
            <person name="Booth R.J."/>
            <person name="Williams D.L."/>
            <person name="Moudgil K.D."/>
            <person name="Noonan L.C."/>
            <person name="Grandison P.M."/>
            <person name="McKee J.J."/>
            <person name="Prestidge R.L."/>
            <person name="Watson J.D."/>
        </authorList>
    </citation>
    <scope>NUCLEOTIDE SEQUENCE [GENOMIC DNA]</scope>
    <source>
        <strain>Serovar 2</strain>
    </source>
</reference>
<organism>
    <name type="scientific">Mycobacterium avium</name>
    <dbReference type="NCBI Taxonomy" id="1764"/>
    <lineage>
        <taxon>Bacteria</taxon>
        <taxon>Bacillati</taxon>
        <taxon>Actinomycetota</taxon>
        <taxon>Actinomycetes</taxon>
        <taxon>Mycobacteriales</taxon>
        <taxon>Mycobacteriaceae</taxon>
        <taxon>Mycobacterium</taxon>
        <taxon>Mycobacterium avium complex (MAC)</taxon>
    </lineage>
</organism>
<proteinExistence type="inferred from homology"/>
<feature type="signal peptide" evidence="3">
    <location>
        <begin position="1"/>
        <end position="21"/>
    </location>
</feature>
<feature type="chain" id="PRO_0000018125" description="Lipoprotein LpqH">
    <location>
        <begin position="22"/>
        <end position="161"/>
    </location>
</feature>
<feature type="region of interest" description="Disordered" evidence="2">
    <location>
        <begin position="21"/>
        <end position="49"/>
    </location>
</feature>
<feature type="compositionally biased region" description="Low complexity" evidence="2">
    <location>
        <begin position="21"/>
        <end position="46"/>
    </location>
</feature>
<feature type="lipid moiety-binding region" description="N-palmitoyl cysteine" evidence="3">
    <location>
        <position position="22"/>
    </location>
</feature>
<feature type="lipid moiety-binding region" description="S-diacylglycerol cysteine" evidence="3">
    <location>
        <position position="22"/>
    </location>
</feature>
<name>LPQH_MYCAV</name>